<name>MDTH_ECO27</name>
<reference key="1">
    <citation type="journal article" date="2009" name="J. Bacteriol.">
        <title>Complete genome sequence and comparative genome analysis of enteropathogenic Escherichia coli O127:H6 strain E2348/69.</title>
        <authorList>
            <person name="Iguchi A."/>
            <person name="Thomson N.R."/>
            <person name="Ogura Y."/>
            <person name="Saunders D."/>
            <person name="Ooka T."/>
            <person name="Henderson I.R."/>
            <person name="Harris D."/>
            <person name="Asadulghani M."/>
            <person name="Kurokawa K."/>
            <person name="Dean P."/>
            <person name="Kenny B."/>
            <person name="Quail M.A."/>
            <person name="Thurston S."/>
            <person name="Dougan G."/>
            <person name="Hayashi T."/>
            <person name="Parkhill J."/>
            <person name="Frankel G."/>
        </authorList>
    </citation>
    <scope>NUCLEOTIDE SEQUENCE [LARGE SCALE GENOMIC DNA]</scope>
    <source>
        <strain>E2348/69 / EPEC</strain>
    </source>
</reference>
<comment type="function">
    <text evidence="1">Confers resistance to norfloxacin and enoxacin.</text>
</comment>
<comment type="subcellular location">
    <subcellularLocation>
        <location evidence="1">Cell inner membrane</location>
        <topology evidence="1">Multi-pass membrane protein</topology>
    </subcellularLocation>
</comment>
<comment type="similarity">
    <text evidence="1">Belongs to the major facilitator superfamily. DHA1 family. MdtH (TC 2.A.1.2.21) subfamily.</text>
</comment>
<gene>
    <name evidence="1" type="primary">mdtH</name>
    <name type="ordered locus">E2348C_1155</name>
</gene>
<feature type="chain" id="PRO_1000185164" description="Multidrug resistance protein MdtH">
    <location>
        <begin position="1"/>
        <end position="402"/>
    </location>
</feature>
<feature type="topological domain" description="Cytoplasmic" evidence="1">
    <location>
        <begin position="1"/>
        <end position="12"/>
    </location>
</feature>
<feature type="transmembrane region" description="Helical" evidence="1">
    <location>
        <begin position="13"/>
        <end position="33"/>
    </location>
</feature>
<feature type="topological domain" description="Periplasmic" evidence="1">
    <location>
        <begin position="34"/>
        <end position="98"/>
    </location>
</feature>
<feature type="transmembrane region" description="Helical" evidence="1">
    <location>
        <begin position="99"/>
        <end position="116"/>
    </location>
</feature>
<feature type="topological domain" description="Cytoplasmic" evidence="1">
    <location>
        <begin position="117"/>
        <end position="138"/>
    </location>
</feature>
<feature type="transmembrane region" description="Helical" evidence="1">
    <location>
        <begin position="139"/>
        <end position="159"/>
    </location>
</feature>
<feature type="topological domain" description="Periplasmic" evidence="1">
    <location>
        <begin position="160"/>
        <end position="164"/>
    </location>
</feature>
<feature type="transmembrane region" description="Helical" evidence="1">
    <location>
        <begin position="165"/>
        <end position="185"/>
    </location>
</feature>
<feature type="topological domain" description="Cytoplasmic" evidence="1">
    <location>
        <begin position="186"/>
        <end position="213"/>
    </location>
</feature>
<feature type="transmembrane region" description="Helical" evidence="1">
    <location>
        <begin position="214"/>
        <end position="234"/>
    </location>
</feature>
<feature type="topological domain" description="Periplasmic" evidence="1">
    <location>
        <begin position="235"/>
        <end position="243"/>
    </location>
</feature>
<feature type="transmembrane region" description="Helical" evidence="1">
    <location>
        <begin position="244"/>
        <end position="264"/>
    </location>
</feature>
<feature type="topological domain" description="Cytoplasmic" evidence="1">
    <location>
        <begin position="265"/>
        <end position="276"/>
    </location>
</feature>
<feature type="transmembrane region" description="Helical" evidence="1">
    <location>
        <begin position="277"/>
        <end position="297"/>
    </location>
</feature>
<feature type="topological domain" description="Periplasmic" evidence="1">
    <location>
        <begin position="298"/>
        <end position="299"/>
    </location>
</feature>
<feature type="transmembrane region" description="Helical" evidence="1">
    <location>
        <begin position="300"/>
        <end position="320"/>
    </location>
</feature>
<feature type="topological domain" description="Cytoplasmic" evidence="1">
    <location>
        <begin position="321"/>
        <end position="339"/>
    </location>
</feature>
<feature type="transmembrane region" description="Helical" evidence="1">
    <location>
        <begin position="340"/>
        <end position="360"/>
    </location>
</feature>
<feature type="topological domain" description="Periplasmic" evidence="1">
    <location>
        <begin position="361"/>
        <end position="367"/>
    </location>
</feature>
<feature type="transmembrane region" description="Helical" evidence="1">
    <location>
        <begin position="368"/>
        <end position="388"/>
    </location>
</feature>
<feature type="topological domain" description="Cytoplasmic" evidence="1">
    <location>
        <begin position="389"/>
        <end position="402"/>
    </location>
</feature>
<sequence length="402" mass="44363">MSRVSQARNLGKYFLLIDNMLVVLGFFVVFPLISIRFVDQMGWAAVMVGIALGLRQFIQQGLGIFGGAIADRFGAKPMIVTGMLMRAAGFATMGIAHEPWLLWFSCLLSGLGGTLFDPPRSALVVKLIRPQQRGRFFSLLMMQDSAGAVIGALLGSWLLQYDFRLVCATGAVLFVLCAAFNAWLLPAWKLSTVRTPVREGMTRVMRDKRFVTYVLTLAGYYMLAVQVMLMLPIMVNDVAGAPSAVKWMYAIEACLSLTLLYPIARWSEKHFRLEHRLMAGLLIMSLSMMPVGMVSGLQQLFTLICLFYIGSIIAEPARETLSASLADARARGSYMGFSRLGLAIGGAIGYIGGGWLFDLGKSAHQPELPWMMLGIIGIFTFLALGWQFSQKRAARRLLERDA</sequence>
<proteinExistence type="inferred from homology"/>
<dbReference type="EMBL" id="FM180568">
    <property type="protein sequence ID" value="CAS08703.1"/>
    <property type="molecule type" value="Genomic_DNA"/>
</dbReference>
<dbReference type="RefSeq" id="WP_000092206.1">
    <property type="nucleotide sequence ID" value="NC_011601.1"/>
</dbReference>
<dbReference type="SMR" id="B7UP79"/>
<dbReference type="GeneID" id="75203652"/>
<dbReference type="KEGG" id="ecg:E2348C_1155"/>
<dbReference type="HOGENOM" id="CLU_001265_60_2_6"/>
<dbReference type="Proteomes" id="UP000008205">
    <property type="component" value="Chromosome"/>
</dbReference>
<dbReference type="GO" id="GO:0005886">
    <property type="term" value="C:plasma membrane"/>
    <property type="evidence" value="ECO:0007669"/>
    <property type="project" value="UniProtKB-SubCell"/>
</dbReference>
<dbReference type="GO" id="GO:0022857">
    <property type="term" value="F:transmembrane transporter activity"/>
    <property type="evidence" value="ECO:0007669"/>
    <property type="project" value="UniProtKB-UniRule"/>
</dbReference>
<dbReference type="GO" id="GO:0046677">
    <property type="term" value="P:response to antibiotic"/>
    <property type="evidence" value="ECO:0007669"/>
    <property type="project" value="UniProtKB-KW"/>
</dbReference>
<dbReference type="CDD" id="cd17329">
    <property type="entry name" value="MFS_MdtH_MDR_like"/>
    <property type="match status" value="1"/>
</dbReference>
<dbReference type="FunFam" id="1.20.1250.20:FF:000039">
    <property type="entry name" value="Multidrug resistance protein MdtH"/>
    <property type="match status" value="1"/>
</dbReference>
<dbReference type="Gene3D" id="1.20.1250.20">
    <property type="entry name" value="MFS general substrate transporter like domains"/>
    <property type="match status" value="1"/>
</dbReference>
<dbReference type="HAMAP" id="MF_01529">
    <property type="entry name" value="MFS_MdtH"/>
    <property type="match status" value="1"/>
</dbReference>
<dbReference type="InterPro" id="IPR011701">
    <property type="entry name" value="MFS"/>
</dbReference>
<dbReference type="InterPro" id="IPR020846">
    <property type="entry name" value="MFS_dom"/>
</dbReference>
<dbReference type="InterPro" id="IPR036259">
    <property type="entry name" value="MFS_trans_sf"/>
</dbReference>
<dbReference type="InterPro" id="IPR050171">
    <property type="entry name" value="MFS_Transporters"/>
</dbReference>
<dbReference type="InterPro" id="IPR022855">
    <property type="entry name" value="Multidrug-R_MdtH"/>
</dbReference>
<dbReference type="NCBIfam" id="NF008650">
    <property type="entry name" value="PRK11646.1"/>
    <property type="match status" value="1"/>
</dbReference>
<dbReference type="PANTHER" id="PTHR23517:SF2">
    <property type="entry name" value="MULTIDRUG RESISTANCE PROTEIN MDTH"/>
    <property type="match status" value="1"/>
</dbReference>
<dbReference type="PANTHER" id="PTHR23517">
    <property type="entry name" value="RESISTANCE PROTEIN MDTM, PUTATIVE-RELATED-RELATED"/>
    <property type="match status" value="1"/>
</dbReference>
<dbReference type="Pfam" id="PF07690">
    <property type="entry name" value="MFS_1"/>
    <property type="match status" value="1"/>
</dbReference>
<dbReference type="SUPFAM" id="SSF103473">
    <property type="entry name" value="MFS general substrate transporter"/>
    <property type="match status" value="1"/>
</dbReference>
<dbReference type="PROSITE" id="PS50850">
    <property type="entry name" value="MFS"/>
    <property type="match status" value="1"/>
</dbReference>
<keyword id="KW-0046">Antibiotic resistance</keyword>
<keyword id="KW-0997">Cell inner membrane</keyword>
<keyword id="KW-1003">Cell membrane</keyword>
<keyword id="KW-0472">Membrane</keyword>
<keyword id="KW-1185">Reference proteome</keyword>
<keyword id="KW-0812">Transmembrane</keyword>
<keyword id="KW-1133">Transmembrane helix</keyword>
<keyword id="KW-0813">Transport</keyword>
<evidence type="ECO:0000255" key="1">
    <source>
        <dbReference type="HAMAP-Rule" id="MF_01529"/>
    </source>
</evidence>
<accession>B7UP79</accession>
<protein>
    <recommendedName>
        <fullName evidence="1">Multidrug resistance protein MdtH</fullName>
    </recommendedName>
</protein>
<organism>
    <name type="scientific">Escherichia coli O127:H6 (strain E2348/69 / EPEC)</name>
    <dbReference type="NCBI Taxonomy" id="574521"/>
    <lineage>
        <taxon>Bacteria</taxon>
        <taxon>Pseudomonadati</taxon>
        <taxon>Pseudomonadota</taxon>
        <taxon>Gammaproteobacteria</taxon>
        <taxon>Enterobacterales</taxon>
        <taxon>Enterobacteriaceae</taxon>
        <taxon>Escherichia</taxon>
    </lineage>
</organism>